<sequence length="459" mass="51300">MCKYGKSNLAAVASSTSSIIGAAAAAVAEAQPSASPSTSSSFLLLEVPFRHLLRLQPPPYFIAGTRRMAAQLDVTTLIAIVGFVFVFCLYLIHIIALSYSKYRLHHKVKEDSSLPGVSIIKPIVGKDNNLYENIESFFTTQYHKYELLFCFNSSDDEAVEVVKCLMKKYPKVDAKLFFGGETVGLNPKINNMMPAYRSALYPLILVSDSGIFMRSDGVLDMATTMMSHEKMALVTQTPYCKDREGFDAAFEQMYFGTSHGRIYLAGNCMDFVCSTGMSSMMKKEALDECGGISNFGGYLAEDYFFGRELANRGYKSAISSHPALQNSSSVSVSSFLDRICRWVKLRIAMLPHILLVEPLQDCFPSGLIMAFSLNHLVGLNIMPILILHTIYWFSMDYSLMNSMQNGKLSFSPLQFMLIWLLRELTAPFVFIKALLQPTIQWRNNVFHLAWGGQILPPKC</sequence>
<comment type="function">
    <text evidence="3 4 5 6">Catalyzes the first glycosylation step in glycosphingolipid biosynthesis, the transfer of glucose to ceramide to produce glucosylceramides (GlcCer). GlcCer are known to contribute to the physical properties and physiological functions of membranes and may regulate signal transduction. Seems to be the major active form in the nematode (PubMed:19240113, PubMed:21325339). Only branched-chain sphingoid bases like 15-methylhexadecasphing-4-enine are used for generating complex sphingolipids in Caenorhabditis elegans (PubMed:7651085). Together with cgt-1, plays a role in the trafficking of proteins such as mig-14 to the cell membrane in intestinal cells (PubMed:26115433).</text>
</comment>
<comment type="catalytic activity">
    <reaction evidence="4">
        <text>an N-acylsphing-4-enine + UDP-alpha-D-glucose = a beta-D-glucosyl-(1&lt;-&gt;1')-N-acylsphing-4-enine + UDP + H(+)</text>
        <dbReference type="Rhea" id="RHEA:12088"/>
        <dbReference type="ChEBI" id="CHEBI:15378"/>
        <dbReference type="ChEBI" id="CHEBI:22801"/>
        <dbReference type="ChEBI" id="CHEBI:52639"/>
        <dbReference type="ChEBI" id="CHEBI:58223"/>
        <dbReference type="ChEBI" id="CHEBI:58885"/>
        <dbReference type="EC" id="2.4.1.80"/>
    </reaction>
    <physiologicalReaction direction="left-to-right" evidence="4">
        <dbReference type="Rhea" id="RHEA:12089"/>
    </physiologicalReaction>
</comment>
<comment type="catalytic activity">
    <reaction evidence="11 12">
        <text>an N-acyl-15-methylhexadecasphing-4-enine + UDP-alpha-D-glucose = an N-acyl-1-beta-D-glucosyl-15-methylhexadecasphing-4-enine + UDP + H(+)</text>
        <dbReference type="Rhea" id="RHEA:34611"/>
        <dbReference type="ChEBI" id="CHEBI:15378"/>
        <dbReference type="ChEBI" id="CHEBI:58223"/>
        <dbReference type="ChEBI" id="CHEBI:58885"/>
        <dbReference type="ChEBI" id="CHEBI:70815"/>
        <dbReference type="ChEBI" id="CHEBI:70846"/>
    </reaction>
    <physiologicalReaction direction="left-to-right" evidence="11 12">
        <dbReference type="Rhea" id="RHEA:34612"/>
    </physiologicalReaction>
</comment>
<comment type="pathway">
    <text evidence="3 4">Lipid metabolism; sphingolipid metabolism.</text>
</comment>
<comment type="subcellular location">
    <subcellularLocation>
        <location evidence="10">Membrane</location>
        <topology evidence="10">Multi-pass membrane protein</topology>
    </subcellularLocation>
</comment>
<comment type="alternative products">
    <event type="alternative splicing"/>
    <isoform>
        <id>Q21054-1</id>
        <name evidence="13">a</name>
        <sequence type="displayed"/>
    </isoform>
    <isoform>
        <id>Q21054-2</id>
        <name evidence="14">b</name>
        <sequence type="described" ref="VSP_045384"/>
    </isoform>
    <isoform>
        <id>Q21054-4</id>
        <name evidence="15">d</name>
        <sequence type="described" ref="VSP_045383"/>
    </isoform>
</comment>
<comment type="tissue specificity">
    <text evidence="11 12">Expressed in pharyngeal intestinal valve, intestinal rectal valve and hypodermis.</text>
</comment>
<comment type="domain">
    <text evidence="1">The D1, D2, D3, (Q/R)XXRW motif is a critical part of the GCS active site, involved in catalysis and UDP-sugar binding.</text>
</comment>
<comment type="disruption phenotype">
    <text evidence="3 4 5">Reduced brood size. Reduced glucosyl-ceramide content and expression at cell surface. Increased expression of sphingomyelins and sphingomyelin clustering at cell surface. Loss of function in the germline leads to defects in oocyte formation and early embryonic divisions and shortened body length. Loss of function in somatic cells may lead to L1 arrest (PubMed:19240113, PubMed:21325339). Double RNAi-mediated knockdown together with cgt-1 reduces the rate of development and restores the basolateral cell membrane localization of mig-14 in intestinal cells in a sgk-1 ok538 mutant background (PubMed:26115433).</text>
</comment>
<comment type="similarity">
    <text evidence="10">Belongs to the glycosyltransferase 2 family.</text>
</comment>
<organism>
    <name type="scientific">Caenorhabditis elegans</name>
    <dbReference type="NCBI Taxonomy" id="6239"/>
    <lineage>
        <taxon>Eukaryota</taxon>
        <taxon>Metazoa</taxon>
        <taxon>Ecdysozoa</taxon>
        <taxon>Nematoda</taxon>
        <taxon>Chromadorea</taxon>
        <taxon>Rhabditida</taxon>
        <taxon>Rhabditina</taxon>
        <taxon>Rhabditomorpha</taxon>
        <taxon>Rhabditoidea</taxon>
        <taxon>Rhabditidae</taxon>
        <taxon>Peloderinae</taxon>
        <taxon>Caenorhabditis</taxon>
    </lineage>
</organism>
<gene>
    <name evidence="13" type="primary">cgt-3</name>
    <name evidence="13" type="ORF">F59G1.1</name>
</gene>
<protein>
    <recommendedName>
        <fullName>Ceramide glucosyltransferase 3</fullName>
        <shortName evidence="8 9">CGT-3</shortName>
        <ecNumber evidence="4">2.4.1.80</ecNumber>
    </recommendedName>
</protein>
<keyword id="KW-0025">Alternative splicing</keyword>
<keyword id="KW-0328">Glycosyltransferase</keyword>
<keyword id="KW-0444">Lipid biosynthesis</keyword>
<keyword id="KW-0443">Lipid metabolism</keyword>
<keyword id="KW-0472">Membrane</keyword>
<keyword id="KW-1185">Reference proteome</keyword>
<keyword id="KW-0746">Sphingolipid metabolism</keyword>
<keyword id="KW-0808">Transferase</keyword>
<keyword id="KW-0812">Transmembrane</keyword>
<keyword id="KW-1133">Transmembrane helix</keyword>
<dbReference type="EC" id="2.4.1.80" evidence="4"/>
<dbReference type="EMBL" id="DQ178632">
    <property type="protein sequence ID" value="ABD75711.1"/>
    <property type="molecule type" value="mRNA"/>
</dbReference>
<dbReference type="EMBL" id="DQ178633">
    <property type="protein sequence ID" value="ABD75712.1"/>
    <property type="molecule type" value="mRNA"/>
</dbReference>
<dbReference type="EMBL" id="DQ178634">
    <property type="protein sequence ID" value="ABD75713.1"/>
    <property type="molecule type" value="mRNA"/>
</dbReference>
<dbReference type="EMBL" id="BX284602">
    <property type="protein sequence ID" value="CCD70149.1"/>
    <property type="molecule type" value="Genomic_DNA"/>
</dbReference>
<dbReference type="EMBL" id="BX284602">
    <property type="protein sequence ID" value="CCD70150.1"/>
    <property type="molecule type" value="Genomic_DNA"/>
</dbReference>
<dbReference type="EMBL" id="BX284602">
    <property type="protein sequence ID" value="CCD70152.1"/>
    <property type="molecule type" value="Genomic_DNA"/>
</dbReference>
<dbReference type="RefSeq" id="NP_001367789.1">
    <molecule id="Q21054-4"/>
    <property type="nucleotide sequence ID" value="NM_001381440.1"/>
</dbReference>
<dbReference type="RefSeq" id="NP_495181.2">
    <molecule id="Q21054-2"/>
    <property type="nucleotide sequence ID" value="NM_062780.5"/>
</dbReference>
<dbReference type="RefSeq" id="NP_495182.2">
    <molecule id="Q21054-1"/>
    <property type="nucleotide sequence ID" value="NM_062781.4"/>
</dbReference>
<dbReference type="RefSeq" id="NP_871996.1">
    <property type="nucleotide sequence ID" value="NM_182196.3"/>
</dbReference>
<dbReference type="SMR" id="Q21054"/>
<dbReference type="FunCoup" id="Q21054">
    <property type="interactions" value="1641"/>
</dbReference>
<dbReference type="STRING" id="6239.F59G1.1b.1"/>
<dbReference type="SwissLipids" id="SLP:000000023"/>
<dbReference type="CAZy" id="GT21">
    <property type="family name" value="Glycosyltransferase Family 21"/>
</dbReference>
<dbReference type="PaxDb" id="6239-F59G1.1b.2"/>
<dbReference type="PeptideAtlas" id="Q21054"/>
<dbReference type="EnsemblMetazoa" id="F59G1.1a.1">
    <molecule id="Q21054-1"/>
    <property type="protein sequence ID" value="F59G1.1a.1"/>
    <property type="gene ID" value="WBGene00019127"/>
</dbReference>
<dbReference type="EnsemblMetazoa" id="F59G1.1b.1">
    <molecule id="Q21054-2"/>
    <property type="protein sequence ID" value="F59G1.1b.1"/>
    <property type="gene ID" value="WBGene00019127"/>
</dbReference>
<dbReference type="EnsemblMetazoa" id="F59G1.1b.2">
    <molecule id="Q21054-2"/>
    <property type="protein sequence ID" value="F59G1.1b.2"/>
    <property type="gene ID" value="WBGene00019127"/>
</dbReference>
<dbReference type="EnsemblMetazoa" id="F59G1.1d.1">
    <molecule id="Q21054-4"/>
    <property type="protein sequence ID" value="F59G1.1d.1"/>
    <property type="gene ID" value="WBGene00019127"/>
</dbReference>
<dbReference type="GeneID" id="174001"/>
<dbReference type="KEGG" id="cel:CELE_F59G1.1"/>
<dbReference type="UCSC" id="F59G1.1b.1">
    <property type="organism name" value="c. elegans"/>
</dbReference>
<dbReference type="AGR" id="WB:WBGene00019127"/>
<dbReference type="CTD" id="174001"/>
<dbReference type="WormBase" id="F59G1.1a">
    <molecule id="Q21054-1"/>
    <property type="protein sequence ID" value="CE29810"/>
    <property type="gene ID" value="WBGene00019127"/>
    <property type="gene designation" value="cgt-3"/>
</dbReference>
<dbReference type="WormBase" id="F59G1.1b">
    <molecule id="Q21054-2"/>
    <property type="protein sequence ID" value="CE29811"/>
    <property type="gene ID" value="WBGene00019127"/>
    <property type="gene designation" value="cgt-3"/>
</dbReference>
<dbReference type="WormBase" id="F59G1.1d">
    <molecule id="Q21054-4"/>
    <property type="protein sequence ID" value="CE33409"/>
    <property type="gene ID" value="WBGene00019127"/>
    <property type="gene designation" value="cgt-3"/>
</dbReference>
<dbReference type="eggNOG" id="KOG2547">
    <property type="taxonomic scope" value="Eukaryota"/>
</dbReference>
<dbReference type="GeneTree" id="ENSGT00390000012898"/>
<dbReference type="InParanoid" id="Q21054"/>
<dbReference type="OMA" id="IVWIIDC"/>
<dbReference type="OrthoDB" id="1483400at2759"/>
<dbReference type="UniPathway" id="UPA00222"/>
<dbReference type="PRO" id="PR:Q21054"/>
<dbReference type="Proteomes" id="UP000001940">
    <property type="component" value="Chromosome II"/>
</dbReference>
<dbReference type="Bgee" id="WBGene00019127">
    <property type="expression patterns" value="Expressed in germ line (C elegans) and 4 other cell types or tissues"/>
</dbReference>
<dbReference type="GO" id="GO:0016020">
    <property type="term" value="C:membrane"/>
    <property type="evidence" value="ECO:0000318"/>
    <property type="project" value="GO_Central"/>
</dbReference>
<dbReference type="GO" id="GO:0005886">
    <property type="term" value="C:plasma membrane"/>
    <property type="evidence" value="ECO:0000314"/>
    <property type="project" value="WormBase"/>
</dbReference>
<dbReference type="GO" id="GO:0008120">
    <property type="term" value="F:ceramide glucosyltransferase activity"/>
    <property type="evidence" value="ECO:0000318"/>
    <property type="project" value="GO_Central"/>
</dbReference>
<dbReference type="GO" id="GO:0006679">
    <property type="term" value="P:glucosylceramide biosynthetic process"/>
    <property type="evidence" value="ECO:0000316"/>
    <property type="project" value="WormBase"/>
</dbReference>
<dbReference type="GO" id="GO:0002119">
    <property type="term" value="P:nematode larval development"/>
    <property type="evidence" value="ECO:0000316"/>
    <property type="project" value="WormBase"/>
</dbReference>
<dbReference type="GO" id="GO:0042661">
    <property type="term" value="P:regulation of mesodermal cell fate specification"/>
    <property type="evidence" value="ECO:0000315"/>
    <property type="project" value="UniProtKB"/>
</dbReference>
<dbReference type="GO" id="GO:1904508">
    <property type="term" value="P:regulation of protein localization to basolateral plasma membrane"/>
    <property type="evidence" value="ECO:0000316"/>
    <property type="project" value="WormBase"/>
</dbReference>
<dbReference type="CDD" id="cd02520">
    <property type="entry name" value="Glucosylceramide_synthase"/>
    <property type="match status" value="1"/>
</dbReference>
<dbReference type="FunFam" id="3.90.550.10:FF:000207">
    <property type="entry name" value="Ceramide glucosyltransferase 1"/>
    <property type="match status" value="1"/>
</dbReference>
<dbReference type="Gene3D" id="3.90.550.10">
    <property type="entry name" value="Spore Coat Polysaccharide Biosynthesis Protein SpsA, Chain A"/>
    <property type="match status" value="1"/>
</dbReference>
<dbReference type="InterPro" id="IPR025993">
    <property type="entry name" value="Ceramide_glucosylTrfase"/>
</dbReference>
<dbReference type="InterPro" id="IPR029044">
    <property type="entry name" value="Nucleotide-diphossugar_trans"/>
</dbReference>
<dbReference type="PANTHER" id="PTHR12726">
    <property type="entry name" value="CERAMIDE GLUCOSYLTRANSFERASE"/>
    <property type="match status" value="1"/>
</dbReference>
<dbReference type="PANTHER" id="PTHR12726:SF1">
    <property type="entry name" value="CERAMIDE GLUCOSYLTRANSFERASE 1-RELATED"/>
    <property type="match status" value="1"/>
</dbReference>
<dbReference type="Pfam" id="PF13506">
    <property type="entry name" value="Glyco_transf_21"/>
    <property type="match status" value="1"/>
</dbReference>
<dbReference type="SUPFAM" id="SSF53448">
    <property type="entry name" value="Nucleotide-diphospho-sugar transferases"/>
    <property type="match status" value="1"/>
</dbReference>
<reference key="1">
    <citation type="journal article" date="2007" name="Genomics">
        <title>The frataxin-encoding operon of Caenorhabditis elegans shows complex structure and regulation.</title>
        <authorList>
            <person name="Vazquez-Manrique R.P."/>
            <person name="Gonzalez-Cabo P."/>
            <person name="Ortiz-Martin I."/>
            <person name="Ros S."/>
            <person name="Baylis H.A."/>
            <person name="Palau F."/>
        </authorList>
    </citation>
    <scope>NUCLEOTIDE SEQUENCE [MRNA] (ISOFORMS B AND D)</scope>
    <source>
        <strain>Bristol N2</strain>
    </source>
</reference>
<reference key="2">
    <citation type="journal article" date="1998" name="Science">
        <title>Genome sequence of the nematode C. elegans: a platform for investigating biology.</title>
        <authorList>
            <consortium name="The C. elegans sequencing consortium"/>
        </authorList>
    </citation>
    <scope>NUCLEOTIDE SEQUENCE [LARGE SCALE GENOMIC DNA]</scope>
    <source>
        <strain>Bristol N2</strain>
    </source>
</reference>
<reference key="3">
    <citation type="journal article" date="1995" name="Lipids">
        <title>The glycosylceramides of the nematode Caenorhabditis elegans contain an unusual, branched-chain sphingoid base.</title>
        <authorList>
            <person name="Chitwood D.J."/>
            <person name="Lusby W.R."/>
            <person name="Thompson M.J."/>
            <person name="Kochansky J.P."/>
            <person name="Howarth O.W."/>
        </authorList>
    </citation>
    <scope>FUNCTION</scope>
</reference>
<reference key="4">
    <citation type="journal article" date="2009" name="J. Cell Sci.">
        <title>Expression of ceramide glucosyltransferases, which are essential for glycosphingolipid synthesis, is only required in a small subset of C. elegans cells.</title>
        <authorList>
            <person name="Marza E."/>
            <person name="Simonsen K.T."/>
            <person name="Faergeman N.J."/>
            <person name="Lesa G.M."/>
        </authorList>
    </citation>
    <scope>FUNCTION</scope>
    <scope>CATALYTIC ACTIVITY</scope>
    <scope>TISSUE SPECIFICITY</scope>
    <scope>DISRUPTION PHENOTYPE</scope>
    <scope>PATHWAY</scope>
</reference>
<reference key="5">
    <citation type="journal article" date="2011" name="Glycobiology">
        <title>Ceramide glucosyltransferase of the nematode Caenorhabditis elegans is involved in oocyte formation and in early embryonic cell division.</title>
        <authorList>
            <person name="Nomura K.H."/>
            <person name="Murata D."/>
            <person name="Hayashi Y."/>
            <person name="Dejima K."/>
            <person name="Mizuguchi S."/>
            <person name="Kage-Nakadai E."/>
            <person name="Gengyo-Ando K."/>
            <person name="Mitani S."/>
            <person name="Hirabayashi Y."/>
            <person name="Ito M."/>
            <person name="Nomura K."/>
        </authorList>
    </citation>
    <scope>FUNCTION</scope>
    <scope>CATALYTIC ACTIVITY</scope>
    <scope>PATHWAY</scope>
    <scope>TISSUE SPECIFICITY</scope>
    <scope>DISRUPTION PHENOTYPE</scope>
</reference>
<reference key="6">
    <citation type="journal article" date="2015" name="PLoS ONE">
        <title>Serum- and Glucocorticoid-Inducible Kinase-1 (SGK-1) Plays a Role in Membrane Trafficking in Caenorhabditis elegans.</title>
        <authorList>
            <person name="Zhu M."/>
            <person name="Wu G."/>
            <person name="Li Y.X."/>
            <person name="Stevens J.K."/>
            <person name="Fan C.X."/>
            <person name="Spang A."/>
            <person name="Dong M.Q."/>
        </authorList>
    </citation>
    <scope>FUNCTION</scope>
    <scope>DISRUPTION PHENOTYPE</scope>
</reference>
<reference key="7">
    <citation type="journal article" date="2016" name="PLoS ONE">
        <title>Correction: Serum- and Glucocorticoid-Inducible Kinase-1 (SGK-1) Plays a Role in Membrane Trafficking in Caenorhabditis elegans.</title>
        <authorList>
            <person name="Zhu M."/>
            <person name="Wu G."/>
            <person name="Li Y.X."/>
            <person name="Stevens J.K."/>
            <person name="Fan C.X."/>
            <person name="Spang A."/>
            <person name="Dong M.Q."/>
        </authorList>
    </citation>
    <scope>ERRATUM OF PUBMED:26115433</scope>
</reference>
<accession>Q21054</accession>
<accession>G5EET1</accession>
<accession>G5EGR9</accession>
<accession>Q8T3D8</accession>
<evidence type="ECO:0000250" key="1">
    <source>
        <dbReference type="UniProtKB" id="Q9R0E0"/>
    </source>
</evidence>
<evidence type="ECO:0000255" key="2"/>
<evidence type="ECO:0000269" key="3">
    <source>
    </source>
</evidence>
<evidence type="ECO:0000269" key="4">
    <source>
    </source>
</evidence>
<evidence type="ECO:0000269" key="5">
    <source>
    </source>
</evidence>
<evidence type="ECO:0000269" key="6">
    <source>
    </source>
</evidence>
<evidence type="ECO:0000303" key="7">
    <source>
    </source>
</evidence>
<evidence type="ECO:0000303" key="8">
    <source>
    </source>
</evidence>
<evidence type="ECO:0000303" key="9">
    <source>
    </source>
</evidence>
<evidence type="ECO:0000305" key="10"/>
<evidence type="ECO:0000305" key="11">
    <source>
    </source>
</evidence>
<evidence type="ECO:0000305" key="12">
    <source>
    </source>
</evidence>
<evidence type="ECO:0000312" key="13">
    <source>
        <dbReference type="WormBase" id="F59G1.1a"/>
    </source>
</evidence>
<evidence type="ECO:0000312" key="14">
    <source>
        <dbReference type="WormBase" id="F59G1.1b"/>
    </source>
</evidence>
<evidence type="ECO:0000312" key="15">
    <source>
        <dbReference type="WormBase" id="F59G1.1d"/>
    </source>
</evidence>
<feature type="chain" id="PRO_0000421283" description="Ceramide glucosyltransferase 3">
    <location>
        <begin position="1"/>
        <end position="459"/>
    </location>
</feature>
<feature type="transmembrane region" description="Helical" evidence="2">
    <location>
        <begin position="77"/>
        <end position="97"/>
    </location>
</feature>
<feature type="transmembrane region" description="Helical" evidence="2">
    <location>
        <begin position="367"/>
        <end position="387"/>
    </location>
</feature>
<feature type="transmembrane region" description="Helical" evidence="2">
    <location>
        <begin position="415"/>
        <end position="435"/>
    </location>
</feature>
<feature type="short sequence motif" description="D1" evidence="10">
    <location>
        <position position="156"/>
    </location>
</feature>
<feature type="short sequence motif" description="D2" evidence="10">
    <location>
        <position position="208"/>
    </location>
</feature>
<feature type="short sequence motif" description="D3" evidence="10">
    <location>
        <position position="302"/>
    </location>
</feature>
<feature type="short sequence motif" description="(Q/R)XXRW" evidence="10">
    <location>
        <begin position="338"/>
        <end position="342"/>
    </location>
</feature>
<feature type="active site" description="Proton acceptor" evidence="1">
    <location>
        <position position="302"/>
    </location>
</feature>
<feature type="splice variant" id="VSP_045383" description="In isoform d." evidence="7">
    <location>
        <begin position="1"/>
        <end position="67"/>
    </location>
</feature>
<feature type="splice variant" id="VSP_045384" description="In isoform b." evidence="7">
    <original>MCKYGKSNLAA</original>
    <variation>MEVAKAVATNLSTAANSTVLRT</variation>
    <location>
        <begin position="1"/>
        <end position="11"/>
    </location>
</feature>
<name>CGT3_CAEEL</name>
<proteinExistence type="evidence at protein level"/>